<organism>
    <name type="scientific">Schizosaccharomyces pombe (strain 972 / ATCC 24843)</name>
    <name type="common">Fission yeast</name>
    <dbReference type="NCBI Taxonomy" id="284812"/>
    <lineage>
        <taxon>Eukaryota</taxon>
        <taxon>Fungi</taxon>
        <taxon>Dikarya</taxon>
        <taxon>Ascomycota</taxon>
        <taxon>Taphrinomycotina</taxon>
        <taxon>Schizosaccharomycetes</taxon>
        <taxon>Schizosaccharomycetales</taxon>
        <taxon>Schizosaccharomycetaceae</taxon>
        <taxon>Schizosaccharomyces</taxon>
    </lineage>
</organism>
<comment type="function">
    <text evidence="1">Component of the TRAPP I and TRAPP II complexes. TRAPP I plays a key role in the late stages of endoplasmic reticulum to Golgi traffic. TRAPP II seems to play a role in intra-Golgi transport. Has a role late in meiosis following DNA replication (By similarity).</text>
</comment>
<comment type="subunit">
    <text>Part of the multisubunit TRAPP (transport protein particle) complexes I and II.</text>
</comment>
<comment type="subcellular location">
    <subcellularLocation>
        <location evidence="1">Golgi apparatus</location>
        <location evidence="1">cis-Golgi network</location>
    </subcellularLocation>
</comment>
<comment type="similarity">
    <text evidence="2">Belongs to the TRS85 family.</text>
</comment>
<dbReference type="EMBL" id="CU329671">
    <property type="protein sequence ID" value="CAA22352.1"/>
    <property type="molecule type" value="Genomic_DNA"/>
</dbReference>
<dbReference type="PIR" id="T39495">
    <property type="entry name" value="T39495"/>
</dbReference>
<dbReference type="SMR" id="O94731"/>
<dbReference type="BioGRID" id="276220">
    <property type="interactions" value="7"/>
</dbReference>
<dbReference type="FunCoup" id="O94731">
    <property type="interactions" value="93"/>
</dbReference>
<dbReference type="STRING" id="284812.O94731"/>
<dbReference type="iPTMnet" id="O94731"/>
<dbReference type="PaxDb" id="4896-SPBC1604.19c.1"/>
<dbReference type="EnsemblFungi" id="SPBC1604.19c.1">
    <property type="protein sequence ID" value="SPBC1604.19c.1:pep"/>
    <property type="gene ID" value="SPBC1604.19c"/>
</dbReference>
<dbReference type="KEGG" id="spo:2539665"/>
<dbReference type="PomBase" id="SPBC1604.19c"/>
<dbReference type="VEuPathDB" id="FungiDB:SPBC1604.19c"/>
<dbReference type="eggNOG" id="KOG1938">
    <property type="taxonomic scope" value="Eukaryota"/>
</dbReference>
<dbReference type="HOGENOM" id="CLU_014185_0_0_1"/>
<dbReference type="InParanoid" id="O94731"/>
<dbReference type="OMA" id="KLADWSM"/>
<dbReference type="PhylomeDB" id="O94731"/>
<dbReference type="Reactome" id="R-SPO-8876198">
    <property type="pathway name" value="RAB GEFs exchange GTP for GDP on RABs"/>
</dbReference>
<dbReference type="PRO" id="PR:O94731"/>
<dbReference type="Proteomes" id="UP000002485">
    <property type="component" value="Chromosome II"/>
</dbReference>
<dbReference type="GO" id="GO:0032153">
    <property type="term" value="C:cell division site"/>
    <property type="evidence" value="ECO:0007005"/>
    <property type="project" value="PomBase"/>
</dbReference>
<dbReference type="GO" id="GO:0005829">
    <property type="term" value="C:cytosol"/>
    <property type="evidence" value="ECO:0007005"/>
    <property type="project" value="PomBase"/>
</dbReference>
<dbReference type="GO" id="GO:0005634">
    <property type="term" value="C:nucleus"/>
    <property type="evidence" value="ECO:0007005"/>
    <property type="project" value="PomBase"/>
</dbReference>
<dbReference type="GO" id="GO:1990072">
    <property type="term" value="C:TRAPPIII protein complex"/>
    <property type="evidence" value="ECO:0000318"/>
    <property type="project" value="GO_Central"/>
</dbReference>
<dbReference type="GO" id="GO:0006886">
    <property type="term" value="P:intracellular protein transport"/>
    <property type="evidence" value="ECO:0000305"/>
    <property type="project" value="PomBase"/>
</dbReference>
<dbReference type="GO" id="GO:0016236">
    <property type="term" value="P:macroautophagy"/>
    <property type="evidence" value="ECO:0000305"/>
    <property type="project" value="PomBase"/>
</dbReference>
<dbReference type="GO" id="GO:0051321">
    <property type="term" value="P:meiotic cell cycle"/>
    <property type="evidence" value="ECO:0007669"/>
    <property type="project" value="UniProtKB-KW"/>
</dbReference>
<dbReference type="GO" id="GO:0016192">
    <property type="term" value="P:vesicle-mediated transport"/>
    <property type="evidence" value="ECO:0007669"/>
    <property type="project" value="UniProtKB-KW"/>
</dbReference>
<dbReference type="InterPro" id="IPR024420">
    <property type="entry name" value="TRAPP_III_complex_Trs85"/>
</dbReference>
<dbReference type="PANTHER" id="PTHR12975:SF7">
    <property type="entry name" value="TRANSPORT PROTEIN PARTICLE SUBUNIT TRS85-1"/>
    <property type="match status" value="1"/>
</dbReference>
<dbReference type="PANTHER" id="PTHR12975">
    <property type="entry name" value="TRANSPORT PROTEIN TRAPP"/>
    <property type="match status" value="1"/>
</dbReference>
<dbReference type="Pfam" id="PF12739">
    <property type="entry name" value="TRAPPC-Trs85"/>
    <property type="match status" value="1"/>
</dbReference>
<accession>O94731</accession>
<protein>
    <recommendedName>
        <fullName>Transport protein particle subunit trs85-1</fullName>
        <shortName>TRAPP subunit trs85-1</shortName>
    </recommendedName>
</protein>
<keyword id="KW-0931">ER-Golgi transport</keyword>
<keyword id="KW-0333">Golgi apparatus</keyword>
<keyword id="KW-0469">Meiosis</keyword>
<keyword id="KW-1185">Reference proteome</keyword>
<keyword id="KW-0813">Transport</keyword>
<name>TR851_SCHPO</name>
<sequence>MDIATNFITRSLSEIAPNASQSSLHVTPSSVSNNAFGLKLRQLISDTYCPHIFIMASDDTENFMKRKGFDDFASFIRPFGDRIFQSSTNNSAISKETLDSRIFDNDHDSIRFVPMEAVQVPRQWKRNKAWNTENGLENCANSRFAPGGDIDSFRVLSQKLIEEWVQSGSNNYPENGFLNPILDYLKLLLSGNPVAEHETFSHPVGCLIVITSHNTNPMATVMRLFKEINNAPFPNFISKEILHYYLFIHDEDNNDLSNSKQIFQQMRRSLGANSHFIRLRSNYISAKPLDTDRYDTSSIQSLKNAPRDSMESESFCSSSDDAKPITFVTKNLRKFPIPEWRSSLEVQAESEQSCLPLYPLLPVEEVEGMKKFVQTMLYDSIYPFMQRCVRAWEEDLTPQYGNLTTRLLFASKKYWSRNHSSHSQGNYDPLSLIYSSEKQESIKRKMADFSFMLRDYKRAYEIYDEIRNTFSQDKAWNYLASCEEIQIICLLMQNRNISLKSQISYLNKWFDEMVYIYAVRLHSFYYTFRSVLVTSLLLSLKPAFSIDFAASWLAKILEPGPISLNPFETSFLNTTIAGMYSNKEHVGVTDGNRRRKAAFWFAYSAGFWRDCGHCKMAEICWNLANRVYSKSGWESLSEHMLDLKPTLSENFRVKNTFH</sequence>
<gene>
    <name type="primary">trs85-1</name>
    <name type="ORF">SPBC1604.19c</name>
</gene>
<evidence type="ECO:0000250" key="1"/>
<evidence type="ECO:0000305" key="2"/>
<proteinExistence type="inferred from homology"/>
<feature type="chain" id="PRO_0000343161" description="Transport protein particle subunit trs85-1">
    <location>
        <begin position="1"/>
        <end position="658"/>
    </location>
</feature>
<reference key="1">
    <citation type="journal article" date="2002" name="Nature">
        <title>The genome sequence of Schizosaccharomyces pombe.</title>
        <authorList>
            <person name="Wood V."/>
            <person name="Gwilliam R."/>
            <person name="Rajandream M.A."/>
            <person name="Lyne M.H."/>
            <person name="Lyne R."/>
            <person name="Stewart A."/>
            <person name="Sgouros J.G."/>
            <person name="Peat N."/>
            <person name="Hayles J."/>
            <person name="Baker S.G."/>
            <person name="Basham D."/>
            <person name="Bowman S."/>
            <person name="Brooks K."/>
            <person name="Brown D."/>
            <person name="Brown S."/>
            <person name="Chillingworth T."/>
            <person name="Churcher C.M."/>
            <person name="Collins M."/>
            <person name="Connor R."/>
            <person name="Cronin A."/>
            <person name="Davis P."/>
            <person name="Feltwell T."/>
            <person name="Fraser A."/>
            <person name="Gentles S."/>
            <person name="Goble A."/>
            <person name="Hamlin N."/>
            <person name="Harris D.E."/>
            <person name="Hidalgo J."/>
            <person name="Hodgson G."/>
            <person name="Holroyd S."/>
            <person name="Hornsby T."/>
            <person name="Howarth S."/>
            <person name="Huckle E.J."/>
            <person name="Hunt S."/>
            <person name="Jagels K."/>
            <person name="James K.D."/>
            <person name="Jones L."/>
            <person name="Jones M."/>
            <person name="Leather S."/>
            <person name="McDonald S."/>
            <person name="McLean J."/>
            <person name="Mooney P."/>
            <person name="Moule S."/>
            <person name="Mungall K.L."/>
            <person name="Murphy L.D."/>
            <person name="Niblett D."/>
            <person name="Odell C."/>
            <person name="Oliver K."/>
            <person name="O'Neil S."/>
            <person name="Pearson D."/>
            <person name="Quail M.A."/>
            <person name="Rabbinowitsch E."/>
            <person name="Rutherford K.M."/>
            <person name="Rutter S."/>
            <person name="Saunders D."/>
            <person name="Seeger K."/>
            <person name="Sharp S."/>
            <person name="Skelton J."/>
            <person name="Simmonds M.N."/>
            <person name="Squares R."/>
            <person name="Squares S."/>
            <person name="Stevens K."/>
            <person name="Taylor K."/>
            <person name="Taylor R.G."/>
            <person name="Tivey A."/>
            <person name="Walsh S.V."/>
            <person name="Warren T."/>
            <person name="Whitehead S."/>
            <person name="Woodward J.R."/>
            <person name="Volckaert G."/>
            <person name="Aert R."/>
            <person name="Robben J."/>
            <person name="Grymonprez B."/>
            <person name="Weltjens I."/>
            <person name="Vanstreels E."/>
            <person name="Rieger M."/>
            <person name="Schaefer M."/>
            <person name="Mueller-Auer S."/>
            <person name="Gabel C."/>
            <person name="Fuchs M."/>
            <person name="Duesterhoeft A."/>
            <person name="Fritzc C."/>
            <person name="Holzer E."/>
            <person name="Moestl D."/>
            <person name="Hilbert H."/>
            <person name="Borzym K."/>
            <person name="Langer I."/>
            <person name="Beck A."/>
            <person name="Lehrach H."/>
            <person name="Reinhardt R."/>
            <person name="Pohl T.M."/>
            <person name="Eger P."/>
            <person name="Zimmermann W."/>
            <person name="Wedler H."/>
            <person name="Wambutt R."/>
            <person name="Purnelle B."/>
            <person name="Goffeau A."/>
            <person name="Cadieu E."/>
            <person name="Dreano S."/>
            <person name="Gloux S."/>
            <person name="Lelaure V."/>
            <person name="Mottier S."/>
            <person name="Galibert F."/>
            <person name="Aves S.J."/>
            <person name="Xiang Z."/>
            <person name="Hunt C."/>
            <person name="Moore K."/>
            <person name="Hurst S.M."/>
            <person name="Lucas M."/>
            <person name="Rochet M."/>
            <person name="Gaillardin C."/>
            <person name="Tallada V.A."/>
            <person name="Garzon A."/>
            <person name="Thode G."/>
            <person name="Daga R.R."/>
            <person name="Cruzado L."/>
            <person name="Jimenez J."/>
            <person name="Sanchez M."/>
            <person name="del Rey F."/>
            <person name="Benito J."/>
            <person name="Dominguez A."/>
            <person name="Revuelta J.L."/>
            <person name="Moreno S."/>
            <person name="Armstrong J."/>
            <person name="Forsburg S.L."/>
            <person name="Cerutti L."/>
            <person name="Lowe T."/>
            <person name="McCombie W.R."/>
            <person name="Paulsen I."/>
            <person name="Potashkin J."/>
            <person name="Shpakovski G.V."/>
            <person name="Ussery D."/>
            <person name="Barrell B.G."/>
            <person name="Nurse P."/>
        </authorList>
    </citation>
    <scope>NUCLEOTIDE SEQUENCE [LARGE SCALE GENOMIC DNA]</scope>
    <source>
        <strain>972 / ATCC 24843</strain>
    </source>
</reference>